<name>NRDR_CLOBK</name>
<reference key="1">
    <citation type="journal article" date="2007" name="PLoS ONE">
        <title>Analysis of the neurotoxin complex genes in Clostridium botulinum A1-A4 and B1 strains: BoNT/A3, /Ba4 and /B1 clusters are located within plasmids.</title>
        <authorList>
            <person name="Smith T.J."/>
            <person name="Hill K.K."/>
            <person name="Foley B.T."/>
            <person name="Detter J.C."/>
            <person name="Munk A.C."/>
            <person name="Bruce D.C."/>
            <person name="Doggett N.A."/>
            <person name="Smith L.A."/>
            <person name="Marks J.D."/>
            <person name="Xie G."/>
            <person name="Brettin T.S."/>
        </authorList>
    </citation>
    <scope>NUCLEOTIDE SEQUENCE [LARGE SCALE GENOMIC DNA]</scope>
    <source>
        <strain>Okra / Type B1</strain>
    </source>
</reference>
<sequence>MKCPYCAYGESKVVDSRSTEDGSSIRRRRECLKCNRRYTTYEKIETTPILVIKKNMSREYFDRNKIVNGLMKACQKRPVSRKQIEQIANEVERHISNEMLTEVNTDKIGQIIMKNLKKIDEVSYVRFASVYRQFKDINTFMEEIKNLMDKN</sequence>
<organism>
    <name type="scientific">Clostridium botulinum (strain Okra / Type B1)</name>
    <dbReference type="NCBI Taxonomy" id="498213"/>
    <lineage>
        <taxon>Bacteria</taxon>
        <taxon>Bacillati</taxon>
        <taxon>Bacillota</taxon>
        <taxon>Clostridia</taxon>
        <taxon>Eubacteriales</taxon>
        <taxon>Clostridiaceae</taxon>
        <taxon>Clostridium</taxon>
    </lineage>
</organism>
<comment type="function">
    <text evidence="1">Negatively regulates transcription of bacterial ribonucleotide reductase nrd genes and operons by binding to NrdR-boxes.</text>
</comment>
<comment type="cofactor">
    <cofactor evidence="1">
        <name>Zn(2+)</name>
        <dbReference type="ChEBI" id="CHEBI:29105"/>
    </cofactor>
    <text evidence="1">Binds 1 zinc ion.</text>
</comment>
<comment type="similarity">
    <text evidence="1">Belongs to the NrdR family.</text>
</comment>
<feature type="chain" id="PRO_1000124485" description="Transcriptional repressor NrdR">
    <location>
        <begin position="1"/>
        <end position="151"/>
    </location>
</feature>
<feature type="domain" description="ATP-cone" evidence="1">
    <location>
        <begin position="49"/>
        <end position="139"/>
    </location>
</feature>
<feature type="zinc finger region" evidence="1">
    <location>
        <begin position="3"/>
        <end position="34"/>
    </location>
</feature>
<keyword id="KW-0067">ATP-binding</keyword>
<keyword id="KW-0238">DNA-binding</keyword>
<keyword id="KW-0479">Metal-binding</keyword>
<keyword id="KW-0547">Nucleotide-binding</keyword>
<keyword id="KW-0678">Repressor</keyword>
<keyword id="KW-0804">Transcription</keyword>
<keyword id="KW-0805">Transcription regulation</keyword>
<keyword id="KW-0862">Zinc</keyword>
<keyword id="KW-0863">Zinc-finger</keyword>
<evidence type="ECO:0000255" key="1">
    <source>
        <dbReference type="HAMAP-Rule" id="MF_00440"/>
    </source>
</evidence>
<proteinExistence type="inferred from homology"/>
<dbReference type="EMBL" id="CP000939">
    <property type="protein sequence ID" value="ACA43515.1"/>
    <property type="molecule type" value="Genomic_DNA"/>
</dbReference>
<dbReference type="RefSeq" id="WP_003399430.1">
    <property type="nucleotide sequence ID" value="NC_010516.1"/>
</dbReference>
<dbReference type="SMR" id="B1IIP2"/>
<dbReference type="GeneID" id="5186785"/>
<dbReference type="KEGG" id="cbb:CLD_2106"/>
<dbReference type="HOGENOM" id="CLU_108412_0_0_9"/>
<dbReference type="Proteomes" id="UP000008541">
    <property type="component" value="Chromosome"/>
</dbReference>
<dbReference type="GO" id="GO:0005524">
    <property type="term" value="F:ATP binding"/>
    <property type="evidence" value="ECO:0007669"/>
    <property type="project" value="UniProtKB-KW"/>
</dbReference>
<dbReference type="GO" id="GO:0003677">
    <property type="term" value="F:DNA binding"/>
    <property type="evidence" value="ECO:0007669"/>
    <property type="project" value="UniProtKB-KW"/>
</dbReference>
<dbReference type="GO" id="GO:0008270">
    <property type="term" value="F:zinc ion binding"/>
    <property type="evidence" value="ECO:0007669"/>
    <property type="project" value="UniProtKB-UniRule"/>
</dbReference>
<dbReference type="GO" id="GO:0045892">
    <property type="term" value="P:negative regulation of DNA-templated transcription"/>
    <property type="evidence" value="ECO:0007669"/>
    <property type="project" value="UniProtKB-UniRule"/>
</dbReference>
<dbReference type="HAMAP" id="MF_00440">
    <property type="entry name" value="NrdR"/>
    <property type="match status" value="1"/>
</dbReference>
<dbReference type="InterPro" id="IPR005144">
    <property type="entry name" value="ATP-cone_dom"/>
</dbReference>
<dbReference type="InterPro" id="IPR055173">
    <property type="entry name" value="NrdR-like_N"/>
</dbReference>
<dbReference type="InterPro" id="IPR003796">
    <property type="entry name" value="RNR_NrdR-like"/>
</dbReference>
<dbReference type="NCBIfam" id="TIGR00244">
    <property type="entry name" value="transcriptional regulator NrdR"/>
    <property type="match status" value="1"/>
</dbReference>
<dbReference type="PANTHER" id="PTHR30455">
    <property type="entry name" value="TRANSCRIPTIONAL REPRESSOR NRDR"/>
    <property type="match status" value="1"/>
</dbReference>
<dbReference type="PANTHER" id="PTHR30455:SF2">
    <property type="entry name" value="TRANSCRIPTIONAL REPRESSOR NRDR"/>
    <property type="match status" value="1"/>
</dbReference>
<dbReference type="Pfam" id="PF03477">
    <property type="entry name" value="ATP-cone"/>
    <property type="match status" value="1"/>
</dbReference>
<dbReference type="Pfam" id="PF22811">
    <property type="entry name" value="Zn_ribbon_NrdR"/>
    <property type="match status" value="1"/>
</dbReference>
<dbReference type="PROSITE" id="PS51161">
    <property type="entry name" value="ATP_CONE"/>
    <property type="match status" value="1"/>
</dbReference>
<gene>
    <name evidence="1" type="primary">nrdR</name>
    <name type="ordered locus">CLD_2106</name>
</gene>
<protein>
    <recommendedName>
        <fullName evidence="1">Transcriptional repressor NrdR</fullName>
    </recommendedName>
</protein>
<accession>B1IIP2</accession>